<protein>
    <recommendedName>
        <fullName evidence="1">Pyridoxal 5'-phosphate synthase subunit PdxS</fullName>
        <shortName evidence="1">PLP synthase subunit PdxS</shortName>
        <ecNumber evidence="1">4.3.3.6</ecNumber>
    </recommendedName>
    <alternativeName>
        <fullName evidence="1">Pdx1</fullName>
    </alternativeName>
</protein>
<gene>
    <name evidence="1" type="primary">pdxS</name>
    <name type="ordered locus">BH0022</name>
</gene>
<proteinExistence type="inferred from homology"/>
<sequence>MVDTGTDRVKRGMAEMQKGGVIMDVVNAEQAKIAEEAGAVAVMALERVPADIRAAGGVARMADPTIVEEVMNAVSIPVMAKCRIGHIVEARVLEALGVDYIDESEVLTPADEVYHLNKRDFTVPFVCGARDLGEAARRIGEGASMIRTKGEPGTGNIVEAVRHMRMMQAQIRKVSNMSTDELMTEAKNIGAPYELLLSIKETGELPVVNFAAGGVATPADAALMMQLGADGVFVGSGIFKSETPEKFARAIVEATTHYEDYDLIAKLSKGLGTAMKGIEISTLDASERMQERGWEKGS</sequence>
<accession>Q9KGN6</accession>
<reference key="1">
    <citation type="journal article" date="2000" name="Nucleic Acids Res.">
        <title>Complete genome sequence of the alkaliphilic bacterium Bacillus halodurans and genomic sequence comparison with Bacillus subtilis.</title>
        <authorList>
            <person name="Takami H."/>
            <person name="Nakasone K."/>
            <person name="Takaki Y."/>
            <person name="Maeno G."/>
            <person name="Sasaki R."/>
            <person name="Masui N."/>
            <person name="Fuji F."/>
            <person name="Hirama C."/>
            <person name="Nakamura Y."/>
            <person name="Ogasawara N."/>
            <person name="Kuhara S."/>
            <person name="Horikoshi K."/>
        </authorList>
    </citation>
    <scope>NUCLEOTIDE SEQUENCE [LARGE SCALE GENOMIC DNA]</scope>
    <source>
        <strain>ATCC BAA-125 / DSM 18197 / FERM 7344 / JCM 9153 / C-125</strain>
    </source>
</reference>
<evidence type="ECO:0000255" key="1">
    <source>
        <dbReference type="HAMAP-Rule" id="MF_01824"/>
    </source>
</evidence>
<feature type="chain" id="PRO_0000109379" description="Pyridoxal 5'-phosphate synthase subunit PdxS">
    <location>
        <begin position="1"/>
        <end position="298"/>
    </location>
</feature>
<feature type="active site" description="Schiff-base intermediate with D-ribose 5-phosphate" evidence="1">
    <location>
        <position position="81"/>
    </location>
</feature>
<feature type="binding site" evidence="1">
    <location>
        <position position="24"/>
    </location>
    <ligand>
        <name>D-ribose 5-phosphate</name>
        <dbReference type="ChEBI" id="CHEBI:78346"/>
    </ligand>
</feature>
<feature type="binding site" evidence="1">
    <location>
        <position position="153"/>
    </location>
    <ligand>
        <name>D-ribose 5-phosphate</name>
        <dbReference type="ChEBI" id="CHEBI:78346"/>
    </ligand>
</feature>
<feature type="binding site" evidence="1">
    <location>
        <position position="165"/>
    </location>
    <ligand>
        <name>D-glyceraldehyde 3-phosphate</name>
        <dbReference type="ChEBI" id="CHEBI:59776"/>
    </ligand>
</feature>
<feature type="binding site" evidence="1">
    <location>
        <position position="214"/>
    </location>
    <ligand>
        <name>D-ribose 5-phosphate</name>
        <dbReference type="ChEBI" id="CHEBI:78346"/>
    </ligand>
</feature>
<feature type="binding site" evidence="1">
    <location>
        <begin position="235"/>
        <end position="236"/>
    </location>
    <ligand>
        <name>D-ribose 5-phosphate</name>
        <dbReference type="ChEBI" id="CHEBI:78346"/>
    </ligand>
</feature>
<organism>
    <name type="scientific">Halalkalibacterium halodurans (strain ATCC BAA-125 / DSM 18197 / FERM 7344 / JCM 9153 / C-125)</name>
    <name type="common">Bacillus halodurans</name>
    <dbReference type="NCBI Taxonomy" id="272558"/>
    <lineage>
        <taxon>Bacteria</taxon>
        <taxon>Bacillati</taxon>
        <taxon>Bacillota</taxon>
        <taxon>Bacilli</taxon>
        <taxon>Bacillales</taxon>
        <taxon>Bacillaceae</taxon>
        <taxon>Halalkalibacterium (ex Joshi et al. 2022)</taxon>
    </lineage>
</organism>
<keyword id="KW-0456">Lyase</keyword>
<keyword id="KW-0663">Pyridoxal phosphate</keyword>
<keyword id="KW-1185">Reference proteome</keyword>
<keyword id="KW-0704">Schiff base</keyword>
<name>PDXS_HALH5</name>
<dbReference type="EC" id="4.3.3.6" evidence="1"/>
<dbReference type="EMBL" id="BA000004">
    <property type="protein sequence ID" value="BAB03741.1"/>
    <property type="molecule type" value="Genomic_DNA"/>
</dbReference>
<dbReference type="PIR" id="F83652">
    <property type="entry name" value="F83652"/>
</dbReference>
<dbReference type="RefSeq" id="WP_010896206.1">
    <property type="nucleotide sequence ID" value="NC_002570.2"/>
</dbReference>
<dbReference type="SMR" id="Q9KGN6"/>
<dbReference type="STRING" id="272558.gene:10725840"/>
<dbReference type="KEGG" id="bha:BH0022"/>
<dbReference type="eggNOG" id="COG0214">
    <property type="taxonomic scope" value="Bacteria"/>
</dbReference>
<dbReference type="HOGENOM" id="CLU_055352_1_0_9"/>
<dbReference type="UniPathway" id="UPA00245"/>
<dbReference type="Proteomes" id="UP000001258">
    <property type="component" value="Chromosome"/>
</dbReference>
<dbReference type="GO" id="GO:0036381">
    <property type="term" value="F:pyridoxal 5'-phosphate synthase (glutamine hydrolysing) activity"/>
    <property type="evidence" value="ECO:0007669"/>
    <property type="project" value="UniProtKB-UniRule"/>
</dbReference>
<dbReference type="GO" id="GO:0006520">
    <property type="term" value="P:amino acid metabolic process"/>
    <property type="evidence" value="ECO:0007669"/>
    <property type="project" value="TreeGrafter"/>
</dbReference>
<dbReference type="GO" id="GO:0042823">
    <property type="term" value="P:pyridoxal phosphate biosynthetic process"/>
    <property type="evidence" value="ECO:0007669"/>
    <property type="project" value="UniProtKB-UniRule"/>
</dbReference>
<dbReference type="GO" id="GO:0008615">
    <property type="term" value="P:pyridoxine biosynthetic process"/>
    <property type="evidence" value="ECO:0007669"/>
    <property type="project" value="TreeGrafter"/>
</dbReference>
<dbReference type="CDD" id="cd04727">
    <property type="entry name" value="pdxS"/>
    <property type="match status" value="1"/>
</dbReference>
<dbReference type="FunFam" id="3.20.20.70:FF:000001">
    <property type="entry name" value="Pyridoxine biosynthesis protein PDX1"/>
    <property type="match status" value="1"/>
</dbReference>
<dbReference type="Gene3D" id="3.20.20.70">
    <property type="entry name" value="Aldolase class I"/>
    <property type="match status" value="1"/>
</dbReference>
<dbReference type="HAMAP" id="MF_01824">
    <property type="entry name" value="PdxS"/>
    <property type="match status" value="1"/>
</dbReference>
<dbReference type="InterPro" id="IPR013785">
    <property type="entry name" value="Aldolase_TIM"/>
</dbReference>
<dbReference type="InterPro" id="IPR001852">
    <property type="entry name" value="PdxS/SNZ"/>
</dbReference>
<dbReference type="InterPro" id="IPR033755">
    <property type="entry name" value="PdxS/SNZ_N"/>
</dbReference>
<dbReference type="InterPro" id="IPR011060">
    <property type="entry name" value="RibuloseP-bd_barrel"/>
</dbReference>
<dbReference type="NCBIfam" id="NF003215">
    <property type="entry name" value="PRK04180.1"/>
    <property type="match status" value="1"/>
</dbReference>
<dbReference type="NCBIfam" id="TIGR00343">
    <property type="entry name" value="pyridoxal 5'-phosphate synthase lyase subunit PdxS"/>
    <property type="match status" value="1"/>
</dbReference>
<dbReference type="PANTHER" id="PTHR31829">
    <property type="entry name" value="PYRIDOXAL 5'-PHOSPHATE SYNTHASE SUBUNIT SNZ1-RELATED"/>
    <property type="match status" value="1"/>
</dbReference>
<dbReference type="PANTHER" id="PTHR31829:SF0">
    <property type="entry name" value="PYRIDOXAL 5'-PHOSPHATE SYNTHASE SUBUNIT SNZ1-RELATED"/>
    <property type="match status" value="1"/>
</dbReference>
<dbReference type="Pfam" id="PF01680">
    <property type="entry name" value="SOR_SNZ"/>
    <property type="match status" value="1"/>
</dbReference>
<dbReference type="PIRSF" id="PIRSF029271">
    <property type="entry name" value="Pdx1"/>
    <property type="match status" value="1"/>
</dbReference>
<dbReference type="SUPFAM" id="SSF51366">
    <property type="entry name" value="Ribulose-phoshate binding barrel"/>
    <property type="match status" value="1"/>
</dbReference>
<dbReference type="PROSITE" id="PS01235">
    <property type="entry name" value="PDXS_SNZ_1"/>
    <property type="match status" value="1"/>
</dbReference>
<dbReference type="PROSITE" id="PS51129">
    <property type="entry name" value="PDXS_SNZ_2"/>
    <property type="match status" value="1"/>
</dbReference>
<comment type="function">
    <text evidence="1">Catalyzes the formation of pyridoxal 5'-phosphate from ribose 5-phosphate (RBP), glyceraldehyde 3-phosphate (G3P) and ammonia. The ammonia is provided by the PdxT subunit. Can also use ribulose 5-phosphate and dihydroxyacetone phosphate as substrates, resulting from enzyme-catalyzed isomerization of RBP and G3P, respectively.</text>
</comment>
<comment type="catalytic activity">
    <reaction evidence="1">
        <text>aldehydo-D-ribose 5-phosphate + D-glyceraldehyde 3-phosphate + L-glutamine = pyridoxal 5'-phosphate + L-glutamate + phosphate + 3 H2O + H(+)</text>
        <dbReference type="Rhea" id="RHEA:31507"/>
        <dbReference type="ChEBI" id="CHEBI:15377"/>
        <dbReference type="ChEBI" id="CHEBI:15378"/>
        <dbReference type="ChEBI" id="CHEBI:29985"/>
        <dbReference type="ChEBI" id="CHEBI:43474"/>
        <dbReference type="ChEBI" id="CHEBI:58273"/>
        <dbReference type="ChEBI" id="CHEBI:58359"/>
        <dbReference type="ChEBI" id="CHEBI:59776"/>
        <dbReference type="ChEBI" id="CHEBI:597326"/>
        <dbReference type="EC" id="4.3.3.6"/>
    </reaction>
</comment>
<comment type="pathway">
    <text evidence="1">Cofactor biosynthesis; pyridoxal 5'-phosphate biosynthesis.</text>
</comment>
<comment type="subunit">
    <text evidence="1">In the presence of PdxT, forms a dodecamer of heterodimers.</text>
</comment>
<comment type="similarity">
    <text evidence="1">Belongs to the PdxS/SNZ family.</text>
</comment>